<protein>
    <recommendedName>
        <fullName>Oxidation resistance protein 1</fullName>
    </recommendedName>
</protein>
<proteinExistence type="inferred from homology"/>
<accession>P0CP43</accession>
<accession>Q55R20</accession>
<accession>Q5KF46</accession>
<reference key="1">
    <citation type="journal article" date="2005" name="Science">
        <title>The genome of the basidiomycetous yeast and human pathogen Cryptococcus neoformans.</title>
        <authorList>
            <person name="Loftus B.J."/>
            <person name="Fung E."/>
            <person name="Roncaglia P."/>
            <person name="Rowley D."/>
            <person name="Amedeo P."/>
            <person name="Bruno D."/>
            <person name="Vamathevan J."/>
            <person name="Miranda M."/>
            <person name="Anderson I.J."/>
            <person name="Fraser J.A."/>
            <person name="Allen J.E."/>
            <person name="Bosdet I.E."/>
            <person name="Brent M.R."/>
            <person name="Chiu R."/>
            <person name="Doering T.L."/>
            <person name="Donlin M.J."/>
            <person name="D'Souza C.A."/>
            <person name="Fox D.S."/>
            <person name="Grinberg V."/>
            <person name="Fu J."/>
            <person name="Fukushima M."/>
            <person name="Haas B.J."/>
            <person name="Huang J.C."/>
            <person name="Janbon G."/>
            <person name="Jones S.J.M."/>
            <person name="Koo H.L."/>
            <person name="Krzywinski M.I."/>
            <person name="Kwon-Chung K.J."/>
            <person name="Lengeler K.B."/>
            <person name="Maiti R."/>
            <person name="Marra M.A."/>
            <person name="Marra R.E."/>
            <person name="Mathewson C.A."/>
            <person name="Mitchell T.G."/>
            <person name="Pertea M."/>
            <person name="Riggs F.R."/>
            <person name="Salzberg S.L."/>
            <person name="Schein J.E."/>
            <person name="Shvartsbeyn A."/>
            <person name="Shin H."/>
            <person name="Shumway M."/>
            <person name="Specht C.A."/>
            <person name="Suh B.B."/>
            <person name="Tenney A."/>
            <person name="Utterback T.R."/>
            <person name="Wickes B.L."/>
            <person name="Wortman J.R."/>
            <person name="Wye N.H."/>
            <person name="Kronstad J.W."/>
            <person name="Lodge J.K."/>
            <person name="Heitman J."/>
            <person name="Davis R.W."/>
            <person name="Fraser C.M."/>
            <person name="Hyman R.W."/>
        </authorList>
    </citation>
    <scope>NUCLEOTIDE SEQUENCE [LARGE SCALE GENOMIC DNA]</scope>
    <source>
        <strain>B-3501A</strain>
    </source>
</reference>
<comment type="function">
    <text evidence="1">May be involved in protection from oxidative damage.</text>
</comment>
<comment type="subcellular location">
    <subcellularLocation>
        <location evidence="1">Mitochondrion</location>
    </subcellularLocation>
</comment>
<comment type="similarity">
    <text evidence="4">Belongs to the OXR1 family.</text>
</comment>
<gene>
    <name type="primary">OXR1</name>
    <name type="ordered locus">CNBF1690</name>
</gene>
<evidence type="ECO:0000250" key="1"/>
<evidence type="ECO:0000255" key="2">
    <source>
        <dbReference type="PROSITE-ProRule" id="PRU01234"/>
    </source>
</evidence>
<evidence type="ECO:0000256" key="3">
    <source>
        <dbReference type="SAM" id="MobiDB-lite"/>
    </source>
</evidence>
<evidence type="ECO:0000305" key="4"/>
<dbReference type="EMBL" id="AAEY01000030">
    <property type="protein sequence ID" value="EAL20359.1"/>
    <property type="molecule type" value="Genomic_DNA"/>
</dbReference>
<dbReference type="RefSeq" id="XP_775006.1">
    <property type="nucleotide sequence ID" value="XM_769913.1"/>
</dbReference>
<dbReference type="SMR" id="P0CP43"/>
<dbReference type="GeneID" id="4936721"/>
<dbReference type="KEGG" id="cnb:CNBF1690"/>
<dbReference type="VEuPathDB" id="FungiDB:CNBF1690"/>
<dbReference type="HOGENOM" id="CLU_593145_0_0_1"/>
<dbReference type="OrthoDB" id="2435at5206"/>
<dbReference type="GO" id="GO:0005739">
    <property type="term" value="C:mitochondrion"/>
    <property type="evidence" value="ECO:0007669"/>
    <property type="project" value="UniProtKB-SubCell"/>
</dbReference>
<dbReference type="GO" id="GO:0005634">
    <property type="term" value="C:nucleus"/>
    <property type="evidence" value="ECO:0007669"/>
    <property type="project" value="TreeGrafter"/>
</dbReference>
<dbReference type="GO" id="GO:0006979">
    <property type="term" value="P:response to oxidative stress"/>
    <property type="evidence" value="ECO:0007669"/>
    <property type="project" value="TreeGrafter"/>
</dbReference>
<dbReference type="InterPro" id="IPR006571">
    <property type="entry name" value="TLDc_dom"/>
</dbReference>
<dbReference type="PANTHER" id="PTHR23354:SF62">
    <property type="entry name" value="MUSTARD, ISOFORM V"/>
    <property type="match status" value="1"/>
</dbReference>
<dbReference type="PANTHER" id="PTHR23354">
    <property type="entry name" value="NUCLEOLAR PROTEIN 7/ESTROGEN RECEPTOR COACTIVATOR-RELATED"/>
    <property type="match status" value="1"/>
</dbReference>
<dbReference type="Pfam" id="PF07534">
    <property type="entry name" value="TLD"/>
    <property type="match status" value="1"/>
</dbReference>
<dbReference type="SMART" id="SM00584">
    <property type="entry name" value="TLDc"/>
    <property type="match status" value="1"/>
</dbReference>
<dbReference type="PROSITE" id="PS51886">
    <property type="entry name" value="TLDC"/>
    <property type="match status" value="1"/>
</dbReference>
<feature type="chain" id="PRO_0000410179" description="Oxidation resistance protein 1">
    <location>
        <begin position="1"/>
        <end position="465"/>
    </location>
</feature>
<feature type="domain" description="TLDc" evidence="2">
    <location>
        <begin position="287"/>
        <end position="465"/>
    </location>
</feature>
<feature type="region of interest" description="Disordered" evidence="3">
    <location>
        <begin position="1"/>
        <end position="61"/>
    </location>
</feature>
<feature type="region of interest" description="Disordered" evidence="3">
    <location>
        <begin position="73"/>
        <end position="119"/>
    </location>
</feature>
<feature type="region of interest" description="Disordered" evidence="3">
    <location>
        <begin position="144"/>
        <end position="183"/>
    </location>
</feature>
<feature type="region of interest" description="Disordered" evidence="3">
    <location>
        <begin position="203"/>
        <end position="223"/>
    </location>
</feature>
<feature type="compositionally biased region" description="Polar residues" evidence="3">
    <location>
        <begin position="20"/>
        <end position="32"/>
    </location>
</feature>
<feature type="compositionally biased region" description="Low complexity" evidence="3">
    <location>
        <begin position="103"/>
        <end position="113"/>
    </location>
</feature>
<feature type="compositionally biased region" description="Basic and acidic residues" evidence="3">
    <location>
        <begin position="148"/>
        <end position="162"/>
    </location>
</feature>
<feature type="compositionally biased region" description="Polar residues" evidence="3">
    <location>
        <begin position="165"/>
        <end position="179"/>
    </location>
</feature>
<feature type="compositionally biased region" description="Polar residues" evidence="3">
    <location>
        <begin position="205"/>
        <end position="218"/>
    </location>
</feature>
<keyword id="KW-0496">Mitochondrion</keyword>
<sequence length="465" mass="50814">MPHHHSLPTSSADFGDFNSAPASSIQTSSLSQDDLLGSYDETIRHSPSVKSHPSPDPRASNLDLLFLDHNAEEHRRPEPTYSPRSRPTGVLPESVPHARSPRRLSTFSSSTSPTSPPSITDAGCDIIFHPFYDHMDVNATRAMQKMQGHGERGASKRSDKMQLRGQASHSRIAPSSSPPHSRLLDTLATTTKLASKWRSVIAHPTSPNTADQTHNGQPKPQIRHAETSPMDITHDTPFASAEQIAGSYIPPTGAPGFTQASVLGMKHHGDGPFEPLTLIGRKDSTSNVLTPEDAIGLKACLPPRQRLTNQWTLLFSLDQHGASLSTLYRLIDIYSVSHQSSGNILVIRDGHGNRFGTYMNEPIVKREGTYYGSGESFLFKLTHSCQTIPYRWTGKNKYFALCEAGFMSFGGGAGAYGLILDSTFTHNSSATCPAYNNDILCELEPLKSQHAQSFQCLGLEVWSTL</sequence>
<name>OXR1_CRYNB</name>
<organism>
    <name type="scientific">Cryptococcus neoformans var. neoformans serotype D (strain B-3501A)</name>
    <name type="common">Filobasidiella neoformans</name>
    <dbReference type="NCBI Taxonomy" id="283643"/>
    <lineage>
        <taxon>Eukaryota</taxon>
        <taxon>Fungi</taxon>
        <taxon>Dikarya</taxon>
        <taxon>Basidiomycota</taxon>
        <taxon>Agaricomycotina</taxon>
        <taxon>Tremellomycetes</taxon>
        <taxon>Tremellales</taxon>
        <taxon>Cryptococcaceae</taxon>
        <taxon>Cryptococcus</taxon>
        <taxon>Cryptococcus neoformans species complex</taxon>
    </lineage>
</organism>